<comment type="function">
    <text>May be involved in the calcium-dependent regulation of rhodopsin phosphorylation.</text>
</comment>
<comment type="tissue specificity">
    <text>Brain and retina.</text>
</comment>
<comment type="miscellaneous">
    <text evidence="1">Probably binds two or three calcium ions.</text>
</comment>
<comment type="similarity">
    <text evidence="3">Belongs to the recoverin family.</text>
</comment>
<name>HPCL4_BOVIN</name>
<organism>
    <name type="scientific">Bos taurus</name>
    <name type="common">Bovine</name>
    <dbReference type="NCBI Taxonomy" id="9913"/>
    <lineage>
        <taxon>Eukaryota</taxon>
        <taxon>Metazoa</taxon>
        <taxon>Chordata</taxon>
        <taxon>Craniata</taxon>
        <taxon>Vertebrata</taxon>
        <taxon>Euteleostomi</taxon>
        <taxon>Mammalia</taxon>
        <taxon>Eutheria</taxon>
        <taxon>Laurasiatheria</taxon>
        <taxon>Artiodactyla</taxon>
        <taxon>Ruminantia</taxon>
        <taxon>Pecora</taxon>
        <taxon>Bovidae</taxon>
        <taxon>Bovinae</taxon>
        <taxon>Bos</taxon>
    </lineage>
</organism>
<keyword id="KW-0106">Calcium</keyword>
<keyword id="KW-0903">Direct protein sequencing</keyword>
<keyword id="KW-0449">Lipoprotein</keyword>
<keyword id="KW-0479">Metal-binding</keyword>
<keyword id="KW-0519">Myristate</keyword>
<keyword id="KW-1185">Reference proteome</keyword>
<keyword id="KW-0677">Repeat</keyword>
<accession>P29104</accession>
<accession>A5PKK8</accession>
<dbReference type="EMBL" id="BC142524">
    <property type="protein sequence ID" value="AAI42525.1"/>
    <property type="molecule type" value="mRNA"/>
</dbReference>
<dbReference type="PIR" id="A44103">
    <property type="entry name" value="A44103"/>
</dbReference>
<dbReference type="RefSeq" id="NP_001092852.1">
    <property type="nucleotide sequence ID" value="NM_001099382.1"/>
</dbReference>
<dbReference type="RefSeq" id="XP_059740631.1">
    <property type="nucleotide sequence ID" value="XM_059884648.1"/>
</dbReference>
<dbReference type="SMR" id="P29104"/>
<dbReference type="FunCoup" id="P29104">
    <property type="interactions" value="540"/>
</dbReference>
<dbReference type="STRING" id="9913.ENSBTAP00000065957"/>
<dbReference type="PaxDb" id="9913-ENSBTAP00000019321"/>
<dbReference type="GeneID" id="531339"/>
<dbReference type="KEGG" id="bta:531339"/>
<dbReference type="CTD" id="51440"/>
<dbReference type="eggNOG" id="KOG0044">
    <property type="taxonomic scope" value="Eukaryota"/>
</dbReference>
<dbReference type="HOGENOM" id="CLU_072366_1_0_1"/>
<dbReference type="InParanoid" id="P29104"/>
<dbReference type="OrthoDB" id="191686at2759"/>
<dbReference type="TreeFam" id="TF300009"/>
<dbReference type="Proteomes" id="UP000009136">
    <property type="component" value="Unplaced"/>
</dbReference>
<dbReference type="GO" id="GO:0005509">
    <property type="term" value="F:calcium ion binding"/>
    <property type="evidence" value="ECO:0000318"/>
    <property type="project" value="GO_Central"/>
</dbReference>
<dbReference type="GO" id="GO:0009966">
    <property type="term" value="P:regulation of signal transduction"/>
    <property type="evidence" value="ECO:0000318"/>
    <property type="project" value="GO_Central"/>
</dbReference>
<dbReference type="CDD" id="cd00051">
    <property type="entry name" value="EFh"/>
    <property type="match status" value="2"/>
</dbReference>
<dbReference type="FunFam" id="1.10.238.10:FF:000009">
    <property type="entry name" value="Visinin-like protein 1"/>
    <property type="match status" value="1"/>
</dbReference>
<dbReference type="Gene3D" id="1.10.238.10">
    <property type="entry name" value="EF-hand"/>
    <property type="match status" value="1"/>
</dbReference>
<dbReference type="InterPro" id="IPR011992">
    <property type="entry name" value="EF-hand-dom_pair"/>
</dbReference>
<dbReference type="InterPro" id="IPR018247">
    <property type="entry name" value="EF_Hand_1_Ca_BS"/>
</dbReference>
<dbReference type="InterPro" id="IPR002048">
    <property type="entry name" value="EF_hand_dom"/>
</dbReference>
<dbReference type="InterPro" id="IPR028846">
    <property type="entry name" value="Recoverin"/>
</dbReference>
<dbReference type="PANTHER" id="PTHR23055">
    <property type="entry name" value="CALCIUM BINDING PROTEINS"/>
    <property type="match status" value="1"/>
</dbReference>
<dbReference type="PANTHER" id="PTHR23055:SF84">
    <property type="entry name" value="HIPPOCALCIN-LIKE PROTEIN 4"/>
    <property type="match status" value="1"/>
</dbReference>
<dbReference type="Pfam" id="PF00036">
    <property type="entry name" value="EF-hand_1"/>
    <property type="match status" value="1"/>
</dbReference>
<dbReference type="Pfam" id="PF13499">
    <property type="entry name" value="EF-hand_7"/>
    <property type="match status" value="1"/>
</dbReference>
<dbReference type="PRINTS" id="PR00450">
    <property type="entry name" value="RECOVERIN"/>
</dbReference>
<dbReference type="SMART" id="SM00054">
    <property type="entry name" value="EFh"/>
    <property type="match status" value="3"/>
</dbReference>
<dbReference type="SUPFAM" id="SSF47473">
    <property type="entry name" value="EF-hand"/>
    <property type="match status" value="1"/>
</dbReference>
<dbReference type="PROSITE" id="PS00018">
    <property type="entry name" value="EF_HAND_1"/>
    <property type="match status" value="3"/>
</dbReference>
<dbReference type="PROSITE" id="PS50222">
    <property type="entry name" value="EF_HAND_2"/>
    <property type="match status" value="3"/>
</dbReference>
<gene>
    <name type="primary">HPCAL4</name>
</gene>
<evidence type="ECO:0000250" key="1"/>
<evidence type="ECO:0000255" key="2">
    <source>
        <dbReference type="PROSITE-ProRule" id="PRU00448"/>
    </source>
</evidence>
<evidence type="ECO:0000305" key="3"/>
<feature type="initiator methionine" description="Removed">
    <location>
        <position position="1"/>
    </location>
</feature>
<feature type="chain" id="PRO_0000073776" description="Hippocalcin-like protein 4">
    <location>
        <begin position="2"/>
        <end position="191"/>
    </location>
</feature>
<feature type="domain" description="EF-hand 1" evidence="3">
    <location>
        <begin position="24"/>
        <end position="59"/>
    </location>
</feature>
<feature type="domain" description="EF-hand 2" evidence="2">
    <location>
        <begin position="60"/>
        <end position="95"/>
    </location>
</feature>
<feature type="domain" description="EF-hand 3" evidence="2">
    <location>
        <begin position="96"/>
        <end position="131"/>
    </location>
</feature>
<feature type="binding site" evidence="2">
    <location>
        <position position="73"/>
    </location>
    <ligand>
        <name>Ca(2+)</name>
        <dbReference type="ChEBI" id="CHEBI:29108"/>
        <label>1</label>
    </ligand>
</feature>
<feature type="binding site" evidence="2">
    <location>
        <position position="75"/>
    </location>
    <ligand>
        <name>Ca(2+)</name>
        <dbReference type="ChEBI" id="CHEBI:29108"/>
        <label>1</label>
    </ligand>
</feature>
<feature type="binding site" evidence="2">
    <location>
        <position position="77"/>
    </location>
    <ligand>
        <name>Ca(2+)</name>
        <dbReference type="ChEBI" id="CHEBI:29108"/>
        <label>1</label>
    </ligand>
</feature>
<feature type="binding site" evidence="2">
    <location>
        <position position="79"/>
    </location>
    <ligand>
        <name>Ca(2+)</name>
        <dbReference type="ChEBI" id="CHEBI:29108"/>
        <label>1</label>
    </ligand>
</feature>
<feature type="binding site" evidence="2">
    <location>
        <position position="84"/>
    </location>
    <ligand>
        <name>Ca(2+)</name>
        <dbReference type="ChEBI" id="CHEBI:29108"/>
        <label>1</label>
    </ligand>
</feature>
<feature type="binding site" evidence="2">
    <location>
        <position position="109"/>
    </location>
    <ligand>
        <name>Ca(2+)</name>
        <dbReference type="ChEBI" id="CHEBI:29108"/>
        <label>2</label>
    </ligand>
</feature>
<feature type="binding site" evidence="2">
    <location>
        <position position="111"/>
    </location>
    <ligand>
        <name>Ca(2+)</name>
        <dbReference type="ChEBI" id="CHEBI:29108"/>
        <label>2</label>
    </ligand>
</feature>
<feature type="binding site" evidence="2">
    <location>
        <position position="113"/>
    </location>
    <ligand>
        <name>Ca(2+)</name>
        <dbReference type="ChEBI" id="CHEBI:29108"/>
        <label>2</label>
    </ligand>
</feature>
<feature type="binding site" evidence="2">
    <location>
        <position position="115"/>
    </location>
    <ligand>
        <name>Ca(2+)</name>
        <dbReference type="ChEBI" id="CHEBI:29108"/>
        <label>2</label>
    </ligand>
</feature>
<feature type="binding site" evidence="2">
    <location>
        <position position="120"/>
    </location>
    <ligand>
        <name>Ca(2+)</name>
        <dbReference type="ChEBI" id="CHEBI:29108"/>
        <label>2</label>
    </ligand>
</feature>
<feature type="binding site" evidence="2">
    <location>
        <position position="159"/>
    </location>
    <ligand>
        <name>Ca(2+)</name>
        <dbReference type="ChEBI" id="CHEBI:29108"/>
        <label>3</label>
    </ligand>
</feature>
<feature type="binding site" evidence="2">
    <location>
        <position position="161"/>
    </location>
    <ligand>
        <name>Ca(2+)</name>
        <dbReference type="ChEBI" id="CHEBI:29108"/>
        <label>3</label>
    </ligand>
</feature>
<feature type="binding site" evidence="2">
    <location>
        <position position="163"/>
    </location>
    <ligand>
        <name>Ca(2+)</name>
        <dbReference type="ChEBI" id="CHEBI:29108"/>
        <label>3</label>
    </ligand>
</feature>
<feature type="binding site" evidence="2">
    <location>
        <position position="165"/>
    </location>
    <ligand>
        <name>Ca(2+)</name>
        <dbReference type="ChEBI" id="CHEBI:29108"/>
        <label>3</label>
    </ligand>
</feature>
<feature type="binding site" evidence="2">
    <location>
        <position position="170"/>
    </location>
    <ligand>
        <name>Ca(2+)</name>
        <dbReference type="ChEBI" id="CHEBI:29108"/>
        <label>3</label>
    </ligand>
</feature>
<feature type="lipid moiety-binding region" description="N-myristoyl glycine" evidence="1">
    <location>
        <position position="2"/>
    </location>
</feature>
<feature type="sequence conflict" description="In Ref. 2; AA sequence." evidence="3" ref="2">
    <original>S</original>
    <variation>Y</variation>
    <location>
        <position position="23"/>
    </location>
</feature>
<feature type="sequence conflict" description="In Ref. 2; AA sequence." evidence="3" ref="2">
    <original>W</original>
    <variation>L</variation>
    <location>
        <position position="30"/>
    </location>
</feature>
<feature type="sequence conflict" description="In Ref. 2; AA sequence." evidence="3" ref="2">
    <original>CPS</original>
    <variation>GPA</variation>
    <location>
        <begin position="38"/>
        <end position="40"/>
    </location>
</feature>
<feature type="sequence conflict" description="In Ref. 2; AA sequence." evidence="3" ref="2">
    <original>R</original>
    <variation>L</variation>
    <location>
        <position position="83"/>
    </location>
</feature>
<feature type="sequence conflict" description="In Ref. 2; AA sequence." evidence="3" ref="2">
    <original>C</original>
    <variation>Q</variation>
    <location>
        <position position="87"/>
    </location>
</feature>
<feature type="sequence conflict" description="In Ref. 2; AA sequence." evidence="3" ref="2">
    <original>S</original>
    <variation>D</variation>
    <location>
        <position position="93"/>
    </location>
</feature>
<protein>
    <recommendedName>
        <fullName>Hippocalcin-like protein 4</fullName>
    </recommendedName>
    <alternativeName>
        <fullName>Neurocalcin-beta</fullName>
    </alternativeName>
</protein>
<proteinExistence type="evidence at protein level"/>
<reference key="1">
    <citation type="submission" date="2007-06" db="EMBL/GenBank/DDBJ databases">
        <authorList>
            <consortium name="NIH - Mammalian Gene Collection (MGC) project"/>
        </authorList>
    </citation>
    <scope>NUCLEOTIDE SEQUENCE [LARGE SCALE MRNA]</scope>
    <source>
        <strain>Hereford</strain>
        <tissue>Fetal brain</tissue>
    </source>
</reference>
<reference key="2">
    <citation type="journal article" date="1992" name="J. Biol. Chem.">
        <title>Neurocalcin: a novel calcium-binding protein from bovine brain.</title>
        <authorList>
            <person name="Terasawa M."/>
            <person name="Nakano A."/>
            <person name="Kobayashi R."/>
            <person name="Hidaka H."/>
        </authorList>
    </citation>
    <scope>PROTEIN SEQUENCE OF 8-172</scope>
    <source>
        <tissue>Brain</tissue>
    </source>
</reference>
<sequence>MGKTNSKLAPEVLEDLVQNTEFSEQELKQWYKGFLKDCPSGILNLEEFQQLYIKFFPYGDASKFAQHAFRTFDKNGDGTIDFREFICALSVTSRGSFEQKLNWAFEMYDLDGDGRITRLEMLEIIEAIYKMVGTVIMMRMNQDGLTPQQRVDKIFKKMDQDKDDQITLEEFKEAAKSDPSIVLLLQCDMQK</sequence>